<comment type="function">
    <text evidence="3 4 5">Hydrolyzes lysoglycerophospholipids to produce lysophosphatidic acid (LPA) and the corresponding amines (PubMed:25528375, PubMed:25596343, PubMed:27637550). Shows a preference for 1-O-alkyl-sn-glycero-3-phosphocholine (lyso-PAF), lysophosphatidylethanolamine (lyso-PE) and lysophosphatidylcholine (lyso-PC) (PubMed:25528375, PubMed:25596343, PubMed:27637550). May be involved in bioactive N-acylethanolamine biosynthesis from both N-acyl-lysoplasmenylethanolamin (N-acyl-lysoPlsEt) and N-acyl-lysophosphatidylethanolamin (N-acyl-lysoPE) (PubMed:25596343, PubMed:27637550). In addition, hydrolyzes glycerophospho-N-acylethanolamine to N-acylethanolamine (PubMed:25596343, PubMed:27637550). Does not display glycerophosphodiester phosphodiesterase activity, since it cannot hydrolyze either glycerophosphoinositol or glycerophosphocholine (PubMed:25528375).</text>
</comment>
<comment type="catalytic activity">
    <reaction evidence="3 4">
        <text>1-hexadecanoyl-sn-glycero-3-phosphocholine + H2O = 1-hexadecanoyl-sn-glycero-3-phosphate + choline + H(+)</text>
        <dbReference type="Rhea" id="RHEA:38975"/>
        <dbReference type="ChEBI" id="CHEBI:15354"/>
        <dbReference type="ChEBI" id="CHEBI:15377"/>
        <dbReference type="ChEBI" id="CHEBI:15378"/>
        <dbReference type="ChEBI" id="CHEBI:57518"/>
        <dbReference type="ChEBI" id="CHEBI:72998"/>
    </reaction>
    <physiologicalReaction direction="left-to-right" evidence="3">
        <dbReference type="Rhea" id="RHEA:38976"/>
    </physiologicalReaction>
</comment>
<comment type="catalytic activity">
    <reaction evidence="4">
        <text>1-hexadecanoyl-sn-glycero-3-phosphoethanolamine + H2O = 1-hexadecanoyl-sn-glycero-3-phosphate + ethanolamine + H(+)</text>
        <dbReference type="Rhea" id="RHEA:53172"/>
        <dbReference type="ChEBI" id="CHEBI:15377"/>
        <dbReference type="ChEBI" id="CHEBI:15378"/>
        <dbReference type="ChEBI" id="CHEBI:57518"/>
        <dbReference type="ChEBI" id="CHEBI:57603"/>
        <dbReference type="ChEBI" id="CHEBI:73004"/>
    </reaction>
    <physiologicalReaction direction="left-to-right" evidence="9">
        <dbReference type="Rhea" id="RHEA:53173"/>
    </physiologicalReaction>
</comment>
<comment type="catalytic activity">
    <reaction evidence="4 5">
        <text>N-hexadecanoyl-sn-glycero-3-phosphoethanolamine + H2O = N-hexadecanoylethanolamine + sn-glycerol 3-phosphate + H(+)</text>
        <dbReference type="Rhea" id="RHEA:45436"/>
        <dbReference type="ChEBI" id="CHEBI:15377"/>
        <dbReference type="ChEBI" id="CHEBI:15378"/>
        <dbReference type="ChEBI" id="CHEBI:57597"/>
        <dbReference type="ChEBI" id="CHEBI:71464"/>
        <dbReference type="ChEBI" id="CHEBI:85226"/>
    </reaction>
    <physiologicalReaction direction="left-to-right" evidence="9 10">
        <dbReference type="Rhea" id="RHEA:45437"/>
    </physiologicalReaction>
</comment>
<comment type="catalytic activity">
    <reaction evidence="5">
        <text>N-(5Z,8Z,11Z,14Z-eicosatetraenoyl)-1-(9Z-octadecenoyl)-sn-glycero-3-phosphoethanolamine + H2O = N-(5Z,8Z,11Z,14Z-eicosatetraenoyl)-ethanolamine + 1-(9Z-octadecenoyl)-sn-glycero-3-phosphate + H(+)</text>
        <dbReference type="Rhea" id="RHEA:45544"/>
        <dbReference type="ChEBI" id="CHEBI:2700"/>
        <dbReference type="ChEBI" id="CHEBI:15377"/>
        <dbReference type="ChEBI" id="CHEBI:15378"/>
        <dbReference type="ChEBI" id="CHEBI:74544"/>
        <dbReference type="ChEBI" id="CHEBI:85223"/>
    </reaction>
    <physiologicalReaction direction="left-to-right" evidence="10">
        <dbReference type="Rhea" id="RHEA:45545"/>
    </physiologicalReaction>
</comment>
<comment type="catalytic activity">
    <reaction evidence="5">
        <text>N,1-di-(9Z-octadecenoyl)-sn-glycero-3-phosphoethanolamine + H2O = N-(9Z-octadecenoyl) ethanolamine + 1-(9Z-octadecenoyl)-sn-glycero-3-phosphate + H(+)</text>
        <dbReference type="Rhea" id="RHEA:56460"/>
        <dbReference type="ChEBI" id="CHEBI:15377"/>
        <dbReference type="ChEBI" id="CHEBI:15378"/>
        <dbReference type="ChEBI" id="CHEBI:71466"/>
        <dbReference type="ChEBI" id="CHEBI:74544"/>
        <dbReference type="ChEBI" id="CHEBI:85222"/>
    </reaction>
    <physiologicalReaction direction="left-to-right" evidence="10">
        <dbReference type="Rhea" id="RHEA:56461"/>
    </physiologicalReaction>
</comment>
<comment type="catalytic activity">
    <reaction evidence="4 5">
        <text>N-hexadecanoyl-1-(9Z-octadecenoyl)-sn-glycero-3-phosphoethanolamine + H2O = N-hexadecanoylethanolamine + 1-(9Z-octadecenoyl)-sn-glycero-3-phosphate + H(+)</text>
        <dbReference type="Rhea" id="RHEA:53168"/>
        <dbReference type="ChEBI" id="CHEBI:15377"/>
        <dbReference type="ChEBI" id="CHEBI:15378"/>
        <dbReference type="ChEBI" id="CHEBI:71464"/>
        <dbReference type="ChEBI" id="CHEBI:74544"/>
        <dbReference type="ChEBI" id="CHEBI:85217"/>
    </reaction>
    <physiologicalReaction direction="left-to-right" evidence="4 5">
        <dbReference type="Rhea" id="RHEA:53169"/>
    </physiologicalReaction>
</comment>
<comment type="catalytic activity">
    <reaction evidence="3">
        <text>a 1-O-alkyl-sn-glycero-3-phosphocholine + H2O = a 1-O-alkyl-sn-glycero-3-phosphate + choline + H(+)</text>
        <dbReference type="Rhea" id="RHEA:39927"/>
        <dbReference type="ChEBI" id="CHEBI:15354"/>
        <dbReference type="ChEBI" id="CHEBI:15377"/>
        <dbReference type="ChEBI" id="CHEBI:15378"/>
        <dbReference type="ChEBI" id="CHEBI:30909"/>
        <dbReference type="ChEBI" id="CHEBI:58014"/>
    </reaction>
    <physiologicalReaction direction="left-to-right" evidence="8">
        <dbReference type="Rhea" id="RHEA:39928"/>
    </physiologicalReaction>
</comment>
<comment type="catalytic activity">
    <reaction evidence="4">
        <text>1-O-hexadecyl-sn-glycero-3-phosphocholine + H2O = 1-O-hexadecyl-sn-glycero-3-phosphate + choline + H(+)</text>
        <dbReference type="Rhea" id="RHEA:41143"/>
        <dbReference type="ChEBI" id="CHEBI:15354"/>
        <dbReference type="ChEBI" id="CHEBI:15377"/>
        <dbReference type="ChEBI" id="CHEBI:15378"/>
        <dbReference type="ChEBI" id="CHEBI:64496"/>
        <dbReference type="ChEBI" id="CHEBI:77580"/>
    </reaction>
    <physiologicalReaction direction="left-to-right" evidence="9">
        <dbReference type="Rhea" id="RHEA:41144"/>
    </physiologicalReaction>
</comment>
<comment type="catalytic activity">
    <reaction evidence="4">
        <text>1-(9Z-octadecenoyl)-sn-glycero-3-phosphocholine + H2O = 1-(9Z-octadecenoyl)-sn-glycero-3-phosphate + choline + H(+)</text>
        <dbReference type="Rhea" id="RHEA:38915"/>
        <dbReference type="ChEBI" id="CHEBI:15354"/>
        <dbReference type="ChEBI" id="CHEBI:15377"/>
        <dbReference type="ChEBI" id="CHEBI:15378"/>
        <dbReference type="ChEBI" id="CHEBI:28610"/>
        <dbReference type="ChEBI" id="CHEBI:74544"/>
    </reaction>
    <physiologicalReaction direction="left-to-right" evidence="9">
        <dbReference type="Rhea" id="RHEA:38916"/>
    </physiologicalReaction>
</comment>
<comment type="catalytic activity">
    <reaction evidence="4">
        <text>N,1-dihexadecanoyl-sn-glycero-3-phosphoethanolamine + H2O = N-hexadecanoylethanolamine + 1-hexadecanoyl-sn-glycero-3-phosphate + H(+)</text>
        <dbReference type="Rhea" id="RHEA:45592"/>
        <dbReference type="ChEBI" id="CHEBI:15377"/>
        <dbReference type="ChEBI" id="CHEBI:15378"/>
        <dbReference type="ChEBI" id="CHEBI:57518"/>
        <dbReference type="ChEBI" id="CHEBI:71464"/>
        <dbReference type="ChEBI" id="CHEBI:85335"/>
    </reaction>
    <physiologicalReaction direction="left-to-right" evidence="9">
        <dbReference type="Rhea" id="RHEA:45593"/>
    </physiologicalReaction>
</comment>
<comment type="catalytic activity">
    <reaction evidence="4">
        <text>1-O-(1Z-octadecenyl)-sn-glycero-3-phospho-(N-5Z,8Z,11Z,14Z-eicosatetraenoyl)-ethanolamine + H2O = 1-O-(1Z-octadecenyl)-sn-glycero-3-phosphate + N-(5Z,8Z,11Z,14Z-eicosatetraenoyl)-ethanolamine + H(+)</text>
        <dbReference type="Rhea" id="RHEA:53192"/>
        <dbReference type="ChEBI" id="CHEBI:2700"/>
        <dbReference type="ChEBI" id="CHEBI:15377"/>
        <dbReference type="ChEBI" id="CHEBI:15378"/>
        <dbReference type="ChEBI" id="CHEBI:137016"/>
        <dbReference type="ChEBI" id="CHEBI:137017"/>
    </reaction>
    <physiologicalReaction direction="left-to-right" evidence="4">
        <dbReference type="Rhea" id="RHEA:53193"/>
    </physiologicalReaction>
</comment>
<comment type="catalytic activity">
    <reaction evidence="4">
        <text>1-O-(1Z-octadecenyl)-sn-glycero-3-phospho-(N-9Z-octadecenoyl)-ethanolamine + H2O = 1-O-(1Z-octadecenyl)-sn-glycero-3-phosphate + N-(9Z-octadecenoyl) ethanolamine + H(+)</text>
        <dbReference type="Rhea" id="RHEA:53188"/>
        <dbReference type="ChEBI" id="CHEBI:15377"/>
        <dbReference type="ChEBI" id="CHEBI:15378"/>
        <dbReference type="ChEBI" id="CHEBI:71466"/>
        <dbReference type="ChEBI" id="CHEBI:137010"/>
        <dbReference type="ChEBI" id="CHEBI:137017"/>
    </reaction>
    <physiologicalReaction direction="left-to-right" evidence="4">
        <dbReference type="Rhea" id="RHEA:53189"/>
    </physiologicalReaction>
</comment>
<comment type="catalytic activity">
    <reaction evidence="4 5">
        <text>1-O-(1Z-octadecenyl)-sn-glycero-3-phospho-N-hexadecanoyl-ethanolamine + H2O = 1-O-(1Z-octadecenyl)-sn-glycero-3-phosphate + N-hexadecanoylethanolamine + H(+)</text>
        <dbReference type="Rhea" id="RHEA:53184"/>
        <dbReference type="ChEBI" id="CHEBI:15377"/>
        <dbReference type="ChEBI" id="CHEBI:15378"/>
        <dbReference type="ChEBI" id="CHEBI:71464"/>
        <dbReference type="ChEBI" id="CHEBI:137009"/>
        <dbReference type="ChEBI" id="CHEBI:137017"/>
    </reaction>
    <physiologicalReaction direction="left-to-right" evidence="9 10">
        <dbReference type="Rhea" id="RHEA:53185"/>
    </physiologicalReaction>
</comment>
<comment type="activity regulation">
    <text evidence="1 4">Lysophospholipase D activity is increased by magnesium and manganese and inhibited by calcium in a concentration dependent manner (By similarity). Loss of lysophospholipase D activity by addition of EDTA (PubMed:25596343).</text>
</comment>
<comment type="biophysicochemical properties">
    <kinetics>
        <KM evidence="3">1 mM for lysophosphatidylcholine (lyso-PC)</KM>
        <KM evidence="3">0.32 mM for 1-O-alkyl-sn-glycero-3-phosphocholine (lyso-PAF)</KM>
        <text evidence="3">kcat is 0.032 sec(-1) with lysophosphatidylcholine as substrate. kcat is 0.077 sec(-1) with 1-O-alkyl-sn-glycero-3-phosphocholine as substrate.</text>
    </kinetics>
    <phDependence>
        <text evidence="4">Optimum pH is 7.4.</text>
    </phDependence>
</comment>
<comment type="subcellular location">
    <subcellularLocation>
        <location evidence="1">Cytoplasm</location>
    </subcellularLocation>
    <subcellularLocation>
        <location evidence="4">Membrane</location>
        <topology evidence="2">Multi-pass membrane protein</topology>
    </subcellularLocation>
    <subcellularLocation>
        <location evidence="4">Cytoplasm</location>
        <location evidence="4">Perinuclear region</location>
    </subcellularLocation>
    <subcellularLocation>
        <location evidence="1">Endoplasmic reticulum</location>
    </subcellularLocation>
    <text evidence="1">Concentrated at the perinuclear region and the cell periphery.</text>
</comment>
<comment type="tissue specificity">
    <text evidence="3 4">Widely expressed (PubMed:25528375, PubMed:25596343).</text>
</comment>
<comment type="induction">
    <text evidence="3">Up-regulated in white adipose tissue of obese mice.</text>
</comment>
<comment type="similarity">
    <text evidence="7">Belongs to the glycerophosphoryl diester phosphodiesterase family.</text>
</comment>
<comment type="sequence caution" evidence="7">
    <conflict type="frameshift">
        <sequence resource="EMBL-CDS" id="BAB27650"/>
    </conflict>
</comment>
<sequence length="314" mass="35867">MSSTAAFCLLSTLGGYLVTSFLLLKYPALLHQRKKQRFLSRHISHRGGAGENLENTMAAFQHAVTIGTDMLELDCHITKDEQVVVSHDANLKRSTGVNVNVSDLKYCELPPYLCKLDVPFQRACKCEGKDTRIPLLKEVFEAFPETPINIDIKVNNNVLIKKVSELVKQYKREHLTVWGNANSEIVDKCYKENSDIPILFSLQRVLLILGLFFTGLLPFVPIREQFFEIPMPSIILKLKEPHTISKGHKFLIWLSDTLLMRKALFDHLTARGIQVYVWVLNEEYEYKRAFDLGATGVMTDYPTKLKDFLNNFSA</sequence>
<reference key="1">
    <citation type="journal article" date="2005" name="Science">
        <title>The transcriptional landscape of the mammalian genome.</title>
        <authorList>
            <person name="Carninci P."/>
            <person name="Kasukawa T."/>
            <person name="Katayama S."/>
            <person name="Gough J."/>
            <person name="Frith M.C."/>
            <person name="Maeda N."/>
            <person name="Oyama R."/>
            <person name="Ravasi T."/>
            <person name="Lenhard B."/>
            <person name="Wells C."/>
            <person name="Kodzius R."/>
            <person name="Shimokawa K."/>
            <person name="Bajic V.B."/>
            <person name="Brenner S.E."/>
            <person name="Batalov S."/>
            <person name="Forrest A.R."/>
            <person name="Zavolan M."/>
            <person name="Davis M.J."/>
            <person name="Wilming L.G."/>
            <person name="Aidinis V."/>
            <person name="Allen J.E."/>
            <person name="Ambesi-Impiombato A."/>
            <person name="Apweiler R."/>
            <person name="Aturaliya R.N."/>
            <person name="Bailey T.L."/>
            <person name="Bansal M."/>
            <person name="Baxter L."/>
            <person name="Beisel K.W."/>
            <person name="Bersano T."/>
            <person name="Bono H."/>
            <person name="Chalk A.M."/>
            <person name="Chiu K.P."/>
            <person name="Choudhary V."/>
            <person name="Christoffels A."/>
            <person name="Clutterbuck D.R."/>
            <person name="Crowe M.L."/>
            <person name="Dalla E."/>
            <person name="Dalrymple B.P."/>
            <person name="de Bono B."/>
            <person name="Della Gatta G."/>
            <person name="di Bernardo D."/>
            <person name="Down T."/>
            <person name="Engstrom P."/>
            <person name="Fagiolini M."/>
            <person name="Faulkner G."/>
            <person name="Fletcher C.F."/>
            <person name="Fukushima T."/>
            <person name="Furuno M."/>
            <person name="Futaki S."/>
            <person name="Gariboldi M."/>
            <person name="Georgii-Hemming P."/>
            <person name="Gingeras T.R."/>
            <person name="Gojobori T."/>
            <person name="Green R.E."/>
            <person name="Gustincich S."/>
            <person name="Harbers M."/>
            <person name="Hayashi Y."/>
            <person name="Hensch T.K."/>
            <person name="Hirokawa N."/>
            <person name="Hill D."/>
            <person name="Huminiecki L."/>
            <person name="Iacono M."/>
            <person name="Ikeo K."/>
            <person name="Iwama A."/>
            <person name="Ishikawa T."/>
            <person name="Jakt M."/>
            <person name="Kanapin A."/>
            <person name="Katoh M."/>
            <person name="Kawasawa Y."/>
            <person name="Kelso J."/>
            <person name="Kitamura H."/>
            <person name="Kitano H."/>
            <person name="Kollias G."/>
            <person name="Krishnan S.P."/>
            <person name="Kruger A."/>
            <person name="Kummerfeld S.K."/>
            <person name="Kurochkin I.V."/>
            <person name="Lareau L.F."/>
            <person name="Lazarevic D."/>
            <person name="Lipovich L."/>
            <person name="Liu J."/>
            <person name="Liuni S."/>
            <person name="McWilliam S."/>
            <person name="Madan Babu M."/>
            <person name="Madera M."/>
            <person name="Marchionni L."/>
            <person name="Matsuda H."/>
            <person name="Matsuzawa S."/>
            <person name="Miki H."/>
            <person name="Mignone F."/>
            <person name="Miyake S."/>
            <person name="Morris K."/>
            <person name="Mottagui-Tabar S."/>
            <person name="Mulder N."/>
            <person name="Nakano N."/>
            <person name="Nakauchi H."/>
            <person name="Ng P."/>
            <person name="Nilsson R."/>
            <person name="Nishiguchi S."/>
            <person name="Nishikawa S."/>
            <person name="Nori F."/>
            <person name="Ohara O."/>
            <person name="Okazaki Y."/>
            <person name="Orlando V."/>
            <person name="Pang K.C."/>
            <person name="Pavan W.J."/>
            <person name="Pavesi G."/>
            <person name="Pesole G."/>
            <person name="Petrovsky N."/>
            <person name="Piazza S."/>
            <person name="Reed J."/>
            <person name="Reid J.F."/>
            <person name="Ring B.Z."/>
            <person name="Ringwald M."/>
            <person name="Rost B."/>
            <person name="Ruan Y."/>
            <person name="Salzberg S.L."/>
            <person name="Sandelin A."/>
            <person name="Schneider C."/>
            <person name="Schoenbach C."/>
            <person name="Sekiguchi K."/>
            <person name="Semple C.A."/>
            <person name="Seno S."/>
            <person name="Sessa L."/>
            <person name="Sheng Y."/>
            <person name="Shibata Y."/>
            <person name="Shimada H."/>
            <person name="Shimada K."/>
            <person name="Silva D."/>
            <person name="Sinclair B."/>
            <person name="Sperling S."/>
            <person name="Stupka E."/>
            <person name="Sugiura K."/>
            <person name="Sultana R."/>
            <person name="Takenaka Y."/>
            <person name="Taki K."/>
            <person name="Tammoja K."/>
            <person name="Tan S.L."/>
            <person name="Tang S."/>
            <person name="Taylor M.S."/>
            <person name="Tegner J."/>
            <person name="Teichmann S.A."/>
            <person name="Ueda H.R."/>
            <person name="van Nimwegen E."/>
            <person name="Verardo R."/>
            <person name="Wei C.L."/>
            <person name="Yagi K."/>
            <person name="Yamanishi H."/>
            <person name="Zabarovsky E."/>
            <person name="Zhu S."/>
            <person name="Zimmer A."/>
            <person name="Hide W."/>
            <person name="Bult C."/>
            <person name="Grimmond S.M."/>
            <person name="Teasdale R.D."/>
            <person name="Liu E.T."/>
            <person name="Brusic V."/>
            <person name="Quackenbush J."/>
            <person name="Wahlestedt C."/>
            <person name="Mattick J.S."/>
            <person name="Hume D.A."/>
            <person name="Kai C."/>
            <person name="Sasaki D."/>
            <person name="Tomaru Y."/>
            <person name="Fukuda S."/>
            <person name="Kanamori-Katayama M."/>
            <person name="Suzuki M."/>
            <person name="Aoki J."/>
            <person name="Arakawa T."/>
            <person name="Iida J."/>
            <person name="Imamura K."/>
            <person name="Itoh M."/>
            <person name="Kato T."/>
            <person name="Kawaji H."/>
            <person name="Kawagashira N."/>
            <person name="Kawashima T."/>
            <person name="Kojima M."/>
            <person name="Kondo S."/>
            <person name="Konno H."/>
            <person name="Nakano K."/>
            <person name="Ninomiya N."/>
            <person name="Nishio T."/>
            <person name="Okada M."/>
            <person name="Plessy C."/>
            <person name="Shibata K."/>
            <person name="Shiraki T."/>
            <person name="Suzuki S."/>
            <person name="Tagami M."/>
            <person name="Waki K."/>
            <person name="Watahiki A."/>
            <person name="Okamura-Oho Y."/>
            <person name="Suzuki H."/>
            <person name="Kawai J."/>
            <person name="Hayashizaki Y."/>
        </authorList>
    </citation>
    <scope>NUCLEOTIDE SEQUENCE [LARGE SCALE MRNA]</scope>
    <source>
        <strain>BALB/cJ</strain>
        <strain>C57BL/6J</strain>
        <tissue>Embryo</tissue>
        <tissue>Embryonic head</tissue>
        <tissue>Testis</tissue>
    </source>
</reference>
<reference key="2">
    <citation type="journal article" date="2009" name="PLoS Biol.">
        <title>Lineage-specific biology revealed by a finished genome assembly of the mouse.</title>
        <authorList>
            <person name="Church D.M."/>
            <person name="Goodstadt L."/>
            <person name="Hillier L.W."/>
            <person name="Zody M.C."/>
            <person name="Goldstein S."/>
            <person name="She X."/>
            <person name="Bult C.J."/>
            <person name="Agarwala R."/>
            <person name="Cherry J.L."/>
            <person name="DiCuccio M."/>
            <person name="Hlavina W."/>
            <person name="Kapustin Y."/>
            <person name="Meric P."/>
            <person name="Maglott D."/>
            <person name="Birtle Z."/>
            <person name="Marques A.C."/>
            <person name="Graves T."/>
            <person name="Zhou S."/>
            <person name="Teague B."/>
            <person name="Potamousis K."/>
            <person name="Churas C."/>
            <person name="Place M."/>
            <person name="Herschleb J."/>
            <person name="Runnheim R."/>
            <person name="Forrest D."/>
            <person name="Amos-Landgraf J."/>
            <person name="Schwartz D.C."/>
            <person name="Cheng Z."/>
            <person name="Lindblad-Toh K."/>
            <person name="Eichler E.E."/>
            <person name="Ponting C.P."/>
        </authorList>
    </citation>
    <scope>NUCLEOTIDE SEQUENCE [LARGE SCALE GENOMIC DNA]</scope>
    <source>
        <strain>C57BL/6J</strain>
    </source>
</reference>
<reference key="3">
    <citation type="journal article" date="2004" name="Genome Res.">
        <title>The status, quality, and expansion of the NIH full-length cDNA project: the Mammalian Gene Collection (MGC).</title>
        <authorList>
            <consortium name="The MGC Project Team"/>
        </authorList>
    </citation>
    <scope>NUCLEOTIDE SEQUENCE [LARGE SCALE MRNA]</scope>
    <source>
        <strain>FVB/N</strain>
        <tissue>Mammary tumor</tissue>
    </source>
</reference>
<reference key="4">
    <citation type="journal article" date="2010" name="Cell">
        <title>A tissue-specific atlas of mouse protein phosphorylation and expression.</title>
        <authorList>
            <person name="Huttlin E.L."/>
            <person name="Jedrychowski M.P."/>
            <person name="Elias J.E."/>
            <person name="Goswami T."/>
            <person name="Rad R."/>
            <person name="Beausoleil S.A."/>
            <person name="Villen J."/>
            <person name="Haas W."/>
            <person name="Sowa M.E."/>
            <person name="Gygi S.P."/>
        </authorList>
    </citation>
    <scope>IDENTIFICATION BY MASS SPECTROMETRY [LARGE SCALE ANALYSIS]</scope>
    <source>
        <tissue>Brain</tissue>
        <tissue>Heart</tissue>
        <tissue>Lung</tissue>
        <tissue>Pancreas</tissue>
        <tissue>Spleen</tissue>
        <tissue>Testis</tissue>
    </source>
</reference>
<reference key="5">
    <citation type="journal article" date="2015" name="Biochim. Biophys. Acta">
        <title>Glycerophosphodiesterase GDE4 as a novel lysophospholipase D: a possible involvement in bioactive N-acylethanolamine biosynthesis.</title>
        <authorList>
            <person name="Tsuboi K."/>
            <person name="Okamoto Y."/>
            <person name="Rahman I.A."/>
            <person name="Uyama T."/>
            <person name="Inoue T."/>
            <person name="Tokumura A."/>
            <person name="Ueda N."/>
        </authorList>
    </citation>
    <scope>TISSUE SPECIFICITY</scope>
    <scope>CATALYTIC ACTIVITY</scope>
    <scope>FUNCTION</scope>
    <scope>SUBCELLULAR LOCATION</scope>
    <scope>BIOPHYSICOCHEMICAL PROPERTIES</scope>
</reference>
<reference key="6">
    <citation type="journal article" date="2015" name="J. Biol. Chem.">
        <title>New members of the mammalian glycerophosphodiester phosphodiesterase family: GDE4 and GDE7 produce lysophosphatidic acid by lysophospholipase D activity.</title>
        <authorList>
            <person name="Ohshima N."/>
            <person name="Kudo T."/>
            <person name="Yamashita Y."/>
            <person name="Mariggio S."/>
            <person name="Araki M."/>
            <person name="Honda A."/>
            <person name="Nagano T."/>
            <person name="Isaji C."/>
            <person name="Kato N."/>
            <person name="Corda D."/>
            <person name="Izumi T."/>
            <person name="Yanaka N."/>
        </authorList>
    </citation>
    <scope>SUBCELLULAR LOCATION</scope>
    <scope>TISSUE SPECIFICITY</scope>
    <scope>CATALYTIC ACTIVITY</scope>
    <scope>BIOPHYSICOCHEMICAL PROPERTIES</scope>
    <scope>INDUCTION</scope>
    <scope>FUNCTION</scope>
</reference>
<reference key="7">
    <citation type="journal article" date="2016" name="Biochim. Biophys. Acta">
        <title>Calcium-dependent generation of N-acylethanolamines and lysophosphatidic acids by glycerophosphodiesterase GDE7.</title>
        <authorList>
            <person name="Rahman I.A."/>
            <person name="Tsuboi K."/>
            <person name="Hussain Z."/>
            <person name="Yamashita R."/>
            <person name="Okamoto Y."/>
            <person name="Uyama T."/>
            <person name="Yamazaki N."/>
            <person name="Tanaka T."/>
            <person name="Tokumura A."/>
            <person name="Ueda N."/>
        </authorList>
    </citation>
    <scope>FUNCTION</scope>
    <scope>CATALYTIC ACTIVITY</scope>
</reference>
<organism>
    <name type="scientific">Mus musculus</name>
    <name type="common">Mouse</name>
    <dbReference type="NCBI Taxonomy" id="10090"/>
    <lineage>
        <taxon>Eukaryota</taxon>
        <taxon>Metazoa</taxon>
        <taxon>Chordata</taxon>
        <taxon>Craniata</taxon>
        <taxon>Vertebrata</taxon>
        <taxon>Euteleostomi</taxon>
        <taxon>Mammalia</taxon>
        <taxon>Eutheria</taxon>
        <taxon>Euarchontoglires</taxon>
        <taxon>Glires</taxon>
        <taxon>Rodentia</taxon>
        <taxon>Myomorpha</taxon>
        <taxon>Muroidea</taxon>
        <taxon>Muridae</taxon>
        <taxon>Murinae</taxon>
        <taxon>Mus</taxon>
        <taxon>Mus</taxon>
    </lineage>
</organism>
<gene>
    <name evidence="11" type="primary">Gdpd1</name>
    <name evidence="6" type="synonym">Gde4</name>
</gene>
<proteinExistence type="evidence at protein level"/>
<feature type="chain" id="PRO_0000251932" description="Lysophospholipase D GDPD1">
    <location>
        <begin position="1"/>
        <end position="314"/>
    </location>
</feature>
<feature type="topological domain" description="Extracellular" evidence="2">
    <location>
        <begin position="1"/>
        <end position="3"/>
    </location>
</feature>
<feature type="transmembrane region" description="Helical" evidence="2">
    <location>
        <begin position="4"/>
        <end position="24"/>
    </location>
</feature>
<feature type="topological domain" description="Cytoplasmic" evidence="2">
    <location>
        <begin position="25"/>
        <end position="195"/>
    </location>
</feature>
<feature type="transmembrane region" description="Helical" evidence="2">
    <location>
        <begin position="196"/>
        <end position="216"/>
    </location>
</feature>
<feature type="topological domain" description="Extracellular" evidence="2">
    <location>
        <begin position="217"/>
        <end position="314"/>
    </location>
</feature>
<feature type="domain" description="GP-PDE">
    <location>
        <begin position="40"/>
        <end position="309"/>
    </location>
</feature>
<feature type="binding site" evidence="2">
    <location>
        <position position="72"/>
    </location>
    <ligand>
        <name>a divalent metal cation</name>
        <dbReference type="ChEBI" id="CHEBI:60240"/>
    </ligand>
</feature>
<feature type="binding site" evidence="2">
    <location>
        <position position="74"/>
    </location>
    <ligand>
        <name>a divalent metal cation</name>
        <dbReference type="ChEBI" id="CHEBI:60240"/>
    </ligand>
</feature>
<feature type="binding site" evidence="2">
    <location>
        <position position="87"/>
    </location>
    <ligand>
        <name>a divalent metal cation</name>
        <dbReference type="ChEBI" id="CHEBI:60240"/>
    </ligand>
</feature>
<feature type="sequence conflict" description="In Ref. 1; BAB27650." evidence="7" ref="1">
    <original>L</original>
    <variation>I</variation>
    <location>
        <position position="109"/>
    </location>
</feature>
<feature type="sequence conflict" description="In Ref. 1; BAB30083." evidence="7" ref="1">
    <original>G</original>
    <variation>R</variation>
    <location>
        <position position="296"/>
    </location>
</feature>
<protein>
    <recommendedName>
        <fullName evidence="7">Lysophospholipase D GDPD1</fullName>
        <ecNumber evidence="4 5">3.1.4.-</ecNumber>
    </recommendedName>
    <alternativeName>
        <fullName evidence="6">Glycerophosphodiester phosphodiesterase 4</fullName>
    </alternativeName>
    <alternativeName>
        <fullName>Glycerophosphodiester phosphodiesterase domain-containing protein 1</fullName>
    </alternativeName>
</protein>
<name>GDPD1_MOUSE</name>
<accession>Q9CRY7</accession>
<accession>Q9CT14</accession>
<accession>Q9D4X7</accession>
<dbReference type="EC" id="3.1.4.-" evidence="4 5"/>
<dbReference type="EMBL" id="AK011487">
    <property type="protein sequence ID" value="BAB27650.1"/>
    <property type="status" value="ALT_FRAME"/>
    <property type="molecule type" value="mRNA"/>
</dbReference>
<dbReference type="EMBL" id="AK013864">
    <property type="protein sequence ID" value="BAB29022.1"/>
    <property type="molecule type" value="mRNA"/>
</dbReference>
<dbReference type="EMBL" id="AK016023">
    <property type="protein sequence ID" value="BAB30083.1"/>
    <property type="molecule type" value="mRNA"/>
</dbReference>
<dbReference type="EMBL" id="AK167812">
    <property type="protein sequence ID" value="BAE39839.1"/>
    <property type="molecule type" value="mRNA"/>
</dbReference>
<dbReference type="EMBL" id="AL713917">
    <property type="status" value="NOT_ANNOTATED_CDS"/>
    <property type="molecule type" value="Genomic_DNA"/>
</dbReference>
<dbReference type="EMBL" id="BC016541">
    <property type="protein sequence ID" value="AAH16541.1"/>
    <property type="molecule type" value="mRNA"/>
</dbReference>
<dbReference type="CCDS" id="CCDS25206.1"/>
<dbReference type="RefSeq" id="NP_079914.1">
    <property type="nucleotide sequence ID" value="NM_025638.2"/>
</dbReference>
<dbReference type="SMR" id="Q9CRY7"/>
<dbReference type="BioGRID" id="211560">
    <property type="interactions" value="2"/>
</dbReference>
<dbReference type="FunCoup" id="Q9CRY7">
    <property type="interactions" value="869"/>
</dbReference>
<dbReference type="STRING" id="10090.ENSMUSP00000020804"/>
<dbReference type="SwissLipids" id="SLP:000001717"/>
<dbReference type="GlyGen" id="Q9CRY7">
    <property type="glycosylation" value="2 sites, 1 N-linked glycan (1 site)"/>
</dbReference>
<dbReference type="PhosphoSitePlus" id="Q9CRY7"/>
<dbReference type="SwissPalm" id="Q9CRY7"/>
<dbReference type="PaxDb" id="10090-ENSMUSP00000020804"/>
<dbReference type="PeptideAtlas" id="Q9CRY7"/>
<dbReference type="ProteomicsDB" id="271208"/>
<dbReference type="Pumba" id="Q9CRY7"/>
<dbReference type="Antibodypedia" id="66215">
    <property type="antibodies" value="110 antibodies from 15 providers"/>
</dbReference>
<dbReference type="DNASU" id="66569"/>
<dbReference type="Ensembl" id="ENSMUST00000020804.8">
    <property type="protein sequence ID" value="ENSMUSP00000020804.8"/>
    <property type="gene ID" value="ENSMUSG00000061666.7"/>
</dbReference>
<dbReference type="GeneID" id="66569"/>
<dbReference type="KEGG" id="mmu:66569"/>
<dbReference type="UCSC" id="uc007kte.2">
    <property type="organism name" value="mouse"/>
</dbReference>
<dbReference type="AGR" id="MGI:1913819"/>
<dbReference type="CTD" id="284161"/>
<dbReference type="MGI" id="MGI:1913819">
    <property type="gene designation" value="Gdpd1"/>
</dbReference>
<dbReference type="VEuPathDB" id="HostDB:ENSMUSG00000061666"/>
<dbReference type="eggNOG" id="KOG2258">
    <property type="taxonomic scope" value="Eukaryota"/>
</dbReference>
<dbReference type="GeneTree" id="ENSGT00940000156673"/>
<dbReference type="HOGENOM" id="CLU_030006_5_0_1"/>
<dbReference type="InParanoid" id="Q9CRY7"/>
<dbReference type="OMA" id="VHVWTID"/>
<dbReference type="OrthoDB" id="1058301at2759"/>
<dbReference type="PhylomeDB" id="Q9CRY7"/>
<dbReference type="TreeFam" id="TF328545"/>
<dbReference type="BRENDA" id="3.1.4.39">
    <property type="organism ID" value="3474"/>
</dbReference>
<dbReference type="BioGRID-ORCS" id="66569">
    <property type="hits" value="1 hit in 79 CRISPR screens"/>
</dbReference>
<dbReference type="ChiTaRS" id="Gdpd1">
    <property type="organism name" value="mouse"/>
</dbReference>
<dbReference type="PRO" id="PR:Q9CRY7"/>
<dbReference type="Proteomes" id="UP000000589">
    <property type="component" value="Chromosome 11"/>
</dbReference>
<dbReference type="RNAct" id="Q9CRY7">
    <property type="molecule type" value="protein"/>
</dbReference>
<dbReference type="Bgee" id="ENSMUSG00000061666">
    <property type="expression patterns" value="Expressed in primary oocyte and 267 other cell types or tissues"/>
</dbReference>
<dbReference type="GO" id="GO:0005783">
    <property type="term" value="C:endoplasmic reticulum"/>
    <property type="evidence" value="ECO:0000250"/>
    <property type="project" value="UniProtKB"/>
</dbReference>
<dbReference type="GO" id="GO:0005789">
    <property type="term" value="C:endoplasmic reticulum membrane"/>
    <property type="evidence" value="ECO:0000304"/>
    <property type="project" value="Reactome"/>
</dbReference>
<dbReference type="GO" id="GO:0016020">
    <property type="term" value="C:membrane"/>
    <property type="evidence" value="ECO:0000314"/>
    <property type="project" value="MGI"/>
</dbReference>
<dbReference type="GO" id="GO:0048471">
    <property type="term" value="C:perinuclear region of cytoplasm"/>
    <property type="evidence" value="ECO:0000314"/>
    <property type="project" value="UniProtKB"/>
</dbReference>
<dbReference type="GO" id="GO:0004622">
    <property type="term" value="F:lysophospholipase activity"/>
    <property type="evidence" value="ECO:0000314"/>
    <property type="project" value="MGI"/>
</dbReference>
<dbReference type="GO" id="GO:0046872">
    <property type="term" value="F:metal ion binding"/>
    <property type="evidence" value="ECO:0007669"/>
    <property type="project" value="UniProtKB-KW"/>
</dbReference>
<dbReference type="GO" id="GO:0008081">
    <property type="term" value="F:phosphoric diester hydrolase activity"/>
    <property type="evidence" value="ECO:0000314"/>
    <property type="project" value="MGI"/>
</dbReference>
<dbReference type="GO" id="GO:0070291">
    <property type="term" value="P:N-acylethanolamine metabolic process"/>
    <property type="evidence" value="ECO:0000314"/>
    <property type="project" value="MGI"/>
</dbReference>
<dbReference type="GO" id="GO:0006644">
    <property type="term" value="P:phospholipid metabolic process"/>
    <property type="evidence" value="ECO:0000314"/>
    <property type="project" value="MGI"/>
</dbReference>
<dbReference type="CDD" id="cd08612">
    <property type="entry name" value="GDPD_GDE4"/>
    <property type="match status" value="1"/>
</dbReference>
<dbReference type="Gene3D" id="3.20.20.190">
    <property type="entry name" value="Phosphatidylinositol (PI) phosphodiesterase"/>
    <property type="match status" value="1"/>
</dbReference>
<dbReference type="InterPro" id="IPR052271">
    <property type="entry name" value="GDPD-Related"/>
</dbReference>
<dbReference type="InterPro" id="IPR030395">
    <property type="entry name" value="GP_PDE_dom"/>
</dbReference>
<dbReference type="InterPro" id="IPR017946">
    <property type="entry name" value="PLC-like_Pdiesterase_TIM-brl"/>
</dbReference>
<dbReference type="PANTHER" id="PTHR42758:SF1">
    <property type="entry name" value="LYSOPHOSPHOLIPASE D GDPD1"/>
    <property type="match status" value="1"/>
</dbReference>
<dbReference type="PANTHER" id="PTHR42758">
    <property type="entry name" value="PHOSPHATIDYLGLYCEROL PHOSPHOLIPASE C"/>
    <property type="match status" value="1"/>
</dbReference>
<dbReference type="Pfam" id="PF03009">
    <property type="entry name" value="GDPD"/>
    <property type="match status" value="2"/>
</dbReference>
<dbReference type="SUPFAM" id="SSF51695">
    <property type="entry name" value="PLC-like phosphodiesterases"/>
    <property type="match status" value="1"/>
</dbReference>
<dbReference type="PROSITE" id="PS51704">
    <property type="entry name" value="GP_PDE"/>
    <property type="match status" value="1"/>
</dbReference>
<keyword id="KW-0963">Cytoplasm</keyword>
<keyword id="KW-0256">Endoplasmic reticulum</keyword>
<keyword id="KW-0378">Hydrolase</keyword>
<keyword id="KW-0443">Lipid metabolism</keyword>
<keyword id="KW-0472">Membrane</keyword>
<keyword id="KW-0479">Metal-binding</keyword>
<keyword id="KW-1185">Reference proteome</keyword>
<keyword id="KW-0812">Transmembrane</keyword>
<keyword id="KW-1133">Transmembrane helix</keyword>
<evidence type="ECO:0000250" key="1">
    <source>
        <dbReference type="UniProtKB" id="Q8N9F7"/>
    </source>
</evidence>
<evidence type="ECO:0000255" key="2"/>
<evidence type="ECO:0000269" key="3">
    <source>
    </source>
</evidence>
<evidence type="ECO:0000269" key="4">
    <source>
    </source>
</evidence>
<evidence type="ECO:0000269" key="5">
    <source>
    </source>
</evidence>
<evidence type="ECO:0000303" key="6">
    <source>
    </source>
</evidence>
<evidence type="ECO:0000305" key="7"/>
<evidence type="ECO:0000305" key="8">
    <source>
    </source>
</evidence>
<evidence type="ECO:0000305" key="9">
    <source>
    </source>
</evidence>
<evidence type="ECO:0000305" key="10">
    <source>
    </source>
</evidence>
<evidence type="ECO:0000312" key="11">
    <source>
        <dbReference type="MGI" id="MGI:1913819"/>
    </source>
</evidence>